<protein>
    <recommendedName>
        <fullName evidence="2">Envelope glycoprotein N</fullName>
    </recommendedName>
</protein>
<reference key="1">
    <citation type="journal article" date="2006" name="Virology">
        <title>The genome of Epstein-Barr virus type 2 strain AG876.</title>
        <authorList>
            <person name="Dolan A."/>
            <person name="Addison C."/>
            <person name="Gatherer D."/>
            <person name="Davison A.J."/>
            <person name="McGeoch D.J."/>
        </authorList>
    </citation>
    <scope>NUCLEOTIDE SEQUENCE [LARGE SCALE GENOMIC DNA]</scope>
</reference>
<organism>
    <name type="scientific">Epstein-Barr virus (strain AG876)</name>
    <name type="common">HHV-4</name>
    <name type="synonym">Human herpesvirus 4</name>
    <dbReference type="NCBI Taxonomy" id="82830"/>
    <lineage>
        <taxon>Viruses</taxon>
        <taxon>Duplodnaviria</taxon>
        <taxon>Heunggongvirae</taxon>
        <taxon>Peploviricota</taxon>
        <taxon>Herviviricetes</taxon>
        <taxon>Herpesvirales</taxon>
        <taxon>Orthoherpesviridae</taxon>
        <taxon>Gammaherpesvirinae</taxon>
        <taxon>Lymphocryptovirus</taxon>
        <taxon>Lymphocryptovirus humangamma4</taxon>
        <taxon>Epstein-Barr virus (strain GD1)</taxon>
    </lineage>
</organism>
<accession>P0C6Z3</accession>
<accession>Q777F2</accession>
<gene>
    <name evidence="2" type="primary">gN</name>
    <name type="ORF">BLRF1</name>
</gene>
<name>GN_EBVA8</name>
<feature type="signal peptide" evidence="2">
    <location>
        <begin position="1"/>
        <end position="32"/>
    </location>
</feature>
<feature type="chain" id="PRO_0000375951" description="Envelope glycoprotein N" evidence="2">
    <location>
        <begin position="33"/>
        <end position="102"/>
    </location>
</feature>
<feature type="topological domain" description="Virion surface" evidence="2">
    <location>
        <begin position="33"/>
        <end position="69"/>
    </location>
</feature>
<feature type="transmembrane region" description="Helical" evidence="2">
    <location>
        <begin position="70"/>
        <end position="90"/>
    </location>
</feature>
<feature type="topological domain" description="Intravirion" evidence="2">
    <location>
        <begin position="91"/>
        <end position="102"/>
    </location>
</feature>
<feature type="disulfide bond" description="Interchain (with gM)" evidence="2">
    <location>
        <position position="55"/>
    </location>
</feature>
<proteinExistence type="inferred from homology"/>
<dbReference type="EMBL" id="DQ279927">
    <property type="protein sequence ID" value="ABB89240.1"/>
    <property type="molecule type" value="Genomic_DNA"/>
</dbReference>
<dbReference type="RefSeq" id="YP_001129460.1">
    <property type="nucleotide sequence ID" value="NC_009334.1"/>
</dbReference>
<dbReference type="RefSeq" id="YP_401665.1">
    <property type="nucleotide sequence ID" value="NC_007605.1"/>
</dbReference>
<dbReference type="SMR" id="P0C6Z3"/>
<dbReference type="DNASU" id="3783716"/>
<dbReference type="GeneID" id="3783716"/>
<dbReference type="KEGG" id="vg:3783716"/>
<dbReference type="KEGG" id="vg:5176229"/>
<dbReference type="Proteomes" id="UP000007639">
    <property type="component" value="Genome"/>
</dbReference>
<dbReference type="GO" id="GO:0044177">
    <property type="term" value="C:host cell Golgi apparatus"/>
    <property type="evidence" value="ECO:0007669"/>
    <property type="project" value="UniProtKB-SubCell"/>
</dbReference>
<dbReference type="GO" id="GO:0033644">
    <property type="term" value="C:host cell membrane"/>
    <property type="evidence" value="ECO:0007669"/>
    <property type="project" value="UniProtKB-SubCell"/>
</dbReference>
<dbReference type="GO" id="GO:0016020">
    <property type="term" value="C:membrane"/>
    <property type="evidence" value="ECO:0007669"/>
    <property type="project" value="UniProtKB-KW"/>
</dbReference>
<dbReference type="GO" id="GO:0019031">
    <property type="term" value="C:viral envelope"/>
    <property type="evidence" value="ECO:0007669"/>
    <property type="project" value="UniProtKB-KW"/>
</dbReference>
<dbReference type="GO" id="GO:0055036">
    <property type="term" value="C:virion membrane"/>
    <property type="evidence" value="ECO:0007669"/>
    <property type="project" value="UniProtKB-SubCell"/>
</dbReference>
<dbReference type="HAMAP" id="MF_04037">
    <property type="entry name" value="HSV_GN"/>
    <property type="match status" value="1"/>
</dbReference>
<dbReference type="InterPro" id="IPR005211">
    <property type="entry name" value="Herpes_glycoprotein_N_domain"/>
</dbReference>
<dbReference type="InterPro" id="IPR034707">
    <property type="entry name" value="HSV_GN"/>
</dbReference>
<dbReference type="Pfam" id="PF03554">
    <property type="entry name" value="Herpes_UL73"/>
    <property type="match status" value="1"/>
</dbReference>
<comment type="function">
    <text evidence="2">Envelope glycoprotein necessary for proper maturation of gM and modulation of its membrane fusion activity. Also plays a critical role in virion morphogenesis.</text>
</comment>
<comment type="subunit">
    <text evidence="2">Interacts (via N-terminus) with gM (via N-terminus). The gM-gN heterodimer forms the gCII complex.</text>
</comment>
<comment type="subcellular location">
    <subcellularLocation>
        <location evidence="2">Virion membrane</location>
        <topology evidence="2">Single-pass type I membrane protein</topology>
    </subcellularLocation>
    <subcellularLocation>
        <location evidence="2">Host membrane</location>
        <topology evidence="2">Single-pass type I membrane protein</topology>
    </subcellularLocation>
    <subcellularLocation>
        <location evidence="2">Host Golgi apparatus</location>
        <location evidence="2">Host trans-Golgi network</location>
    </subcellularLocation>
    <text evidence="2">When coexpressed with gM, localizes in the host trans-Golgi network.</text>
</comment>
<comment type="PTM">
    <text evidence="1">O-glycosylated. Contains alpha 2,6-sialic acid residues.</text>
</comment>
<comment type="similarity">
    <text evidence="2">Belongs to the herpesviridae glycoprotein N family.</text>
</comment>
<keyword id="KW-1015">Disulfide bond</keyword>
<keyword id="KW-1040">Host Golgi apparatus</keyword>
<keyword id="KW-1043">Host membrane</keyword>
<keyword id="KW-0472">Membrane</keyword>
<keyword id="KW-1185">Reference proteome</keyword>
<keyword id="KW-0732">Signal</keyword>
<keyword id="KW-0812">Transmembrane</keyword>
<keyword id="KW-1133">Transmembrane helix</keyword>
<keyword id="KW-0261">Viral envelope protein</keyword>
<keyword id="KW-0946">Virion</keyword>
<evidence type="ECO:0000250" key="1">
    <source>
        <dbReference type="UniProtKB" id="P03196"/>
    </source>
</evidence>
<evidence type="ECO:0000255" key="2">
    <source>
        <dbReference type="HAMAP-Rule" id="MF_04037"/>
    </source>
</evidence>
<sequence length="102" mass="10944">MGKVLRKPFAKAVPLLFLAATWLLTGVLPAGASSPTNAAAASLTEAQDQFYSYTCNADTFSPSLTSFASIWALLTLVLVIIASAIYLMYVCFNKFVNTLLTD</sequence>
<organismHost>
    <name type="scientific">Homo sapiens</name>
    <name type="common">Human</name>
    <dbReference type="NCBI Taxonomy" id="9606"/>
</organismHost>